<accession>A4QKT3</accession>
<protein>
    <recommendedName>
        <fullName evidence="2">Small ribosomal subunit protein uS4c</fullName>
    </recommendedName>
    <alternativeName>
        <fullName>30S ribosomal protein S4, chloroplastic</fullName>
    </alternativeName>
</protein>
<comment type="function">
    <text evidence="1">One of the primary rRNA binding proteins, it binds directly to 16S rRNA where it nucleates assembly of the body of the 30S subunit.</text>
</comment>
<comment type="function">
    <text evidence="1">With S5 and S12 plays an important role in translational accuracy.</text>
</comment>
<comment type="subunit">
    <text evidence="1">Part of the 30S ribosomal subunit. Contacts protein S5. The interaction surface between S4 and S5 is involved in control of translational fidelity (By similarity).</text>
</comment>
<comment type="subcellular location">
    <subcellularLocation>
        <location>Plastid</location>
        <location>Chloroplast</location>
    </subcellularLocation>
</comment>
<comment type="similarity">
    <text evidence="2">Belongs to the universal ribosomal protein uS4 family.</text>
</comment>
<gene>
    <name type="primary">rps4</name>
</gene>
<evidence type="ECO:0000250" key="1"/>
<evidence type="ECO:0000305" key="2"/>
<feature type="chain" id="PRO_0000293423" description="Small ribosomal subunit protein uS4c">
    <location>
        <begin position="1"/>
        <end position="201"/>
    </location>
</feature>
<feature type="domain" description="S4 RNA-binding">
    <location>
        <begin position="89"/>
        <end position="152"/>
    </location>
</feature>
<geneLocation type="chloroplast"/>
<dbReference type="EMBL" id="AP009372">
    <property type="protein sequence ID" value="BAF50288.1"/>
    <property type="molecule type" value="Genomic_DNA"/>
</dbReference>
<dbReference type="RefSeq" id="YP_001123464.1">
    <property type="nucleotide sequence ID" value="NC_009271.1"/>
</dbReference>
<dbReference type="SMR" id="A4QKT3"/>
<dbReference type="GeneID" id="4962701"/>
<dbReference type="GO" id="GO:0009507">
    <property type="term" value="C:chloroplast"/>
    <property type="evidence" value="ECO:0007669"/>
    <property type="project" value="UniProtKB-SubCell"/>
</dbReference>
<dbReference type="GO" id="GO:0015935">
    <property type="term" value="C:small ribosomal subunit"/>
    <property type="evidence" value="ECO:0007669"/>
    <property type="project" value="InterPro"/>
</dbReference>
<dbReference type="GO" id="GO:0019843">
    <property type="term" value="F:rRNA binding"/>
    <property type="evidence" value="ECO:0007669"/>
    <property type="project" value="UniProtKB-UniRule"/>
</dbReference>
<dbReference type="GO" id="GO:0003735">
    <property type="term" value="F:structural constituent of ribosome"/>
    <property type="evidence" value="ECO:0007669"/>
    <property type="project" value="InterPro"/>
</dbReference>
<dbReference type="GO" id="GO:0042274">
    <property type="term" value="P:ribosomal small subunit biogenesis"/>
    <property type="evidence" value="ECO:0007669"/>
    <property type="project" value="TreeGrafter"/>
</dbReference>
<dbReference type="GO" id="GO:0006412">
    <property type="term" value="P:translation"/>
    <property type="evidence" value="ECO:0007669"/>
    <property type="project" value="UniProtKB-UniRule"/>
</dbReference>
<dbReference type="CDD" id="cd00165">
    <property type="entry name" value="S4"/>
    <property type="match status" value="1"/>
</dbReference>
<dbReference type="FunFam" id="1.10.1050.10:FF:000002">
    <property type="entry name" value="30S ribosomal protein S4, chloroplastic"/>
    <property type="match status" value="1"/>
</dbReference>
<dbReference type="FunFam" id="3.10.290.10:FF:000081">
    <property type="entry name" value="30S ribosomal protein S4, chloroplastic"/>
    <property type="match status" value="1"/>
</dbReference>
<dbReference type="Gene3D" id="1.10.1050.10">
    <property type="entry name" value="Ribosomal Protein S4 Delta 41, Chain A, domain 1"/>
    <property type="match status" value="1"/>
</dbReference>
<dbReference type="Gene3D" id="3.10.290.10">
    <property type="entry name" value="RNA-binding S4 domain"/>
    <property type="match status" value="1"/>
</dbReference>
<dbReference type="HAMAP" id="MF_01306_B">
    <property type="entry name" value="Ribosomal_uS4_B"/>
    <property type="match status" value="1"/>
</dbReference>
<dbReference type="InterPro" id="IPR022801">
    <property type="entry name" value="Ribosomal_uS4"/>
</dbReference>
<dbReference type="InterPro" id="IPR005709">
    <property type="entry name" value="Ribosomal_uS4_bac-type"/>
</dbReference>
<dbReference type="InterPro" id="IPR018079">
    <property type="entry name" value="Ribosomal_uS4_CS"/>
</dbReference>
<dbReference type="InterPro" id="IPR001912">
    <property type="entry name" value="Ribosomal_uS4_N"/>
</dbReference>
<dbReference type="InterPro" id="IPR002942">
    <property type="entry name" value="S4_RNA-bd"/>
</dbReference>
<dbReference type="InterPro" id="IPR036986">
    <property type="entry name" value="S4_RNA-bd_sf"/>
</dbReference>
<dbReference type="NCBIfam" id="NF003717">
    <property type="entry name" value="PRK05327.1"/>
    <property type="match status" value="1"/>
</dbReference>
<dbReference type="NCBIfam" id="TIGR01017">
    <property type="entry name" value="rpsD_bact"/>
    <property type="match status" value="1"/>
</dbReference>
<dbReference type="PANTHER" id="PTHR11831">
    <property type="entry name" value="30S 40S RIBOSOMAL PROTEIN"/>
    <property type="match status" value="1"/>
</dbReference>
<dbReference type="PANTHER" id="PTHR11831:SF4">
    <property type="entry name" value="SMALL RIBOSOMAL SUBUNIT PROTEIN US4M"/>
    <property type="match status" value="1"/>
</dbReference>
<dbReference type="Pfam" id="PF00163">
    <property type="entry name" value="Ribosomal_S4"/>
    <property type="match status" value="1"/>
</dbReference>
<dbReference type="Pfam" id="PF01479">
    <property type="entry name" value="S4"/>
    <property type="match status" value="1"/>
</dbReference>
<dbReference type="SMART" id="SM01390">
    <property type="entry name" value="Ribosomal_S4"/>
    <property type="match status" value="1"/>
</dbReference>
<dbReference type="SMART" id="SM00363">
    <property type="entry name" value="S4"/>
    <property type="match status" value="1"/>
</dbReference>
<dbReference type="SUPFAM" id="SSF55174">
    <property type="entry name" value="Alpha-L RNA-binding motif"/>
    <property type="match status" value="1"/>
</dbReference>
<dbReference type="PROSITE" id="PS00632">
    <property type="entry name" value="RIBOSOMAL_S4"/>
    <property type="match status" value="1"/>
</dbReference>
<dbReference type="PROSITE" id="PS50889">
    <property type="entry name" value="S4"/>
    <property type="match status" value="1"/>
</dbReference>
<reference key="1">
    <citation type="submission" date="2007-03" db="EMBL/GenBank/DDBJ databases">
        <title>Sequencing analysis of Crucihimalaya wallichii chloroplast DNA.</title>
        <authorList>
            <person name="Hosouchi T."/>
            <person name="Tsuruoka H."/>
            <person name="Kotani H."/>
        </authorList>
    </citation>
    <scope>NUCLEOTIDE SEQUENCE [LARGE SCALE GENOMIC DNA]</scope>
</reference>
<sequence>MSRYRGPRFKKIRRLGALPGLTSKRPKAGSDLRNQSRSVKKSQYRIRLEEKQKLRFHYGLTERQLLKYVRIAGKAKGSTGQVLLQLLEMRLDNILFRLGMALTIPQARQLVNHGHILVNGRIVDIPSYRCKPRDIITVKDEQNSRTLVQNLIDSSAPEELPNHLTLHTFQYEGLVNQIIDRKCVGLKINELLVVEYYSRQT</sequence>
<organism>
    <name type="scientific">Crucihimalaya wallichii</name>
    <name type="common">Rock-cress</name>
    <name type="synonym">Arabidopsis campestris</name>
    <dbReference type="NCBI Taxonomy" id="78192"/>
    <lineage>
        <taxon>Eukaryota</taxon>
        <taxon>Viridiplantae</taxon>
        <taxon>Streptophyta</taxon>
        <taxon>Embryophyta</taxon>
        <taxon>Tracheophyta</taxon>
        <taxon>Spermatophyta</taxon>
        <taxon>Magnoliopsida</taxon>
        <taxon>eudicotyledons</taxon>
        <taxon>Gunneridae</taxon>
        <taxon>Pentapetalae</taxon>
        <taxon>rosids</taxon>
        <taxon>malvids</taxon>
        <taxon>Brassicales</taxon>
        <taxon>Brassicaceae</taxon>
        <taxon>Crucihimalayeae</taxon>
        <taxon>Crucihimalaya</taxon>
    </lineage>
</organism>
<name>RR4_CRUWA</name>
<proteinExistence type="inferred from homology"/>
<keyword id="KW-0150">Chloroplast</keyword>
<keyword id="KW-0934">Plastid</keyword>
<keyword id="KW-0687">Ribonucleoprotein</keyword>
<keyword id="KW-0689">Ribosomal protein</keyword>
<keyword id="KW-0694">RNA-binding</keyword>
<keyword id="KW-0699">rRNA-binding</keyword>